<protein>
    <recommendedName>
        <fullName evidence="1">NAD kinase</fullName>
        <ecNumber evidence="1">2.7.1.23</ecNumber>
    </recommendedName>
    <alternativeName>
        <fullName evidence="1">ATP-dependent NAD kinase</fullName>
    </alternativeName>
</protein>
<comment type="function">
    <text evidence="1">Involved in the regulation of the intracellular balance of NAD and NADP, and is a key enzyme in the biosynthesis of NADP. Catalyzes specifically the phosphorylation on 2'-hydroxyl of the adenosine moiety of NAD to yield NADP.</text>
</comment>
<comment type="catalytic activity">
    <reaction evidence="1">
        <text>NAD(+) + ATP = ADP + NADP(+) + H(+)</text>
        <dbReference type="Rhea" id="RHEA:18629"/>
        <dbReference type="ChEBI" id="CHEBI:15378"/>
        <dbReference type="ChEBI" id="CHEBI:30616"/>
        <dbReference type="ChEBI" id="CHEBI:57540"/>
        <dbReference type="ChEBI" id="CHEBI:58349"/>
        <dbReference type="ChEBI" id="CHEBI:456216"/>
        <dbReference type="EC" id="2.7.1.23"/>
    </reaction>
</comment>
<comment type="cofactor">
    <cofactor evidence="1">
        <name>a divalent metal cation</name>
        <dbReference type="ChEBI" id="CHEBI:60240"/>
    </cofactor>
</comment>
<comment type="subcellular location">
    <subcellularLocation>
        <location evidence="1">Cytoplasm</location>
    </subcellularLocation>
</comment>
<comment type="similarity">
    <text evidence="1">Belongs to the NAD kinase family.</text>
</comment>
<dbReference type="EC" id="2.7.1.23" evidence="1"/>
<dbReference type="EMBL" id="CP000438">
    <property type="protein sequence ID" value="ABJ12320.1"/>
    <property type="molecule type" value="Genomic_DNA"/>
</dbReference>
<dbReference type="RefSeq" id="WP_003091343.1">
    <property type="nucleotide sequence ID" value="NZ_CP034244.1"/>
</dbReference>
<dbReference type="SMR" id="Q02PQ1"/>
<dbReference type="KEGG" id="pau:PA14_24220"/>
<dbReference type="PseudoCAP" id="PA14_24220"/>
<dbReference type="HOGENOM" id="CLU_008831_0_1_6"/>
<dbReference type="BioCyc" id="PAER208963:G1G74-2017-MONOMER"/>
<dbReference type="Proteomes" id="UP000000653">
    <property type="component" value="Chromosome"/>
</dbReference>
<dbReference type="GO" id="GO:0005737">
    <property type="term" value="C:cytoplasm"/>
    <property type="evidence" value="ECO:0007669"/>
    <property type="project" value="UniProtKB-SubCell"/>
</dbReference>
<dbReference type="GO" id="GO:0005524">
    <property type="term" value="F:ATP binding"/>
    <property type="evidence" value="ECO:0007669"/>
    <property type="project" value="UniProtKB-KW"/>
</dbReference>
<dbReference type="GO" id="GO:0046872">
    <property type="term" value="F:metal ion binding"/>
    <property type="evidence" value="ECO:0007669"/>
    <property type="project" value="UniProtKB-UniRule"/>
</dbReference>
<dbReference type="GO" id="GO:0051287">
    <property type="term" value="F:NAD binding"/>
    <property type="evidence" value="ECO:0007669"/>
    <property type="project" value="UniProtKB-ARBA"/>
</dbReference>
<dbReference type="GO" id="GO:0003951">
    <property type="term" value="F:NAD+ kinase activity"/>
    <property type="evidence" value="ECO:0007669"/>
    <property type="project" value="UniProtKB-UniRule"/>
</dbReference>
<dbReference type="GO" id="GO:0019674">
    <property type="term" value="P:NAD metabolic process"/>
    <property type="evidence" value="ECO:0007669"/>
    <property type="project" value="InterPro"/>
</dbReference>
<dbReference type="GO" id="GO:0006741">
    <property type="term" value="P:NADP biosynthetic process"/>
    <property type="evidence" value="ECO:0007669"/>
    <property type="project" value="UniProtKB-UniRule"/>
</dbReference>
<dbReference type="FunFam" id="2.60.200.30:FF:000001">
    <property type="entry name" value="NAD kinase"/>
    <property type="match status" value="1"/>
</dbReference>
<dbReference type="Gene3D" id="3.40.50.10330">
    <property type="entry name" value="Probable inorganic polyphosphate/atp-NAD kinase, domain 1"/>
    <property type="match status" value="1"/>
</dbReference>
<dbReference type="Gene3D" id="2.60.200.30">
    <property type="entry name" value="Probable inorganic polyphosphate/atp-NAD kinase, domain 2"/>
    <property type="match status" value="1"/>
</dbReference>
<dbReference type="HAMAP" id="MF_00361">
    <property type="entry name" value="NAD_kinase"/>
    <property type="match status" value="1"/>
</dbReference>
<dbReference type="InterPro" id="IPR017438">
    <property type="entry name" value="ATP-NAD_kinase_N"/>
</dbReference>
<dbReference type="InterPro" id="IPR017437">
    <property type="entry name" value="ATP-NAD_kinase_PpnK-typ_C"/>
</dbReference>
<dbReference type="InterPro" id="IPR016064">
    <property type="entry name" value="NAD/diacylglycerol_kinase_sf"/>
</dbReference>
<dbReference type="InterPro" id="IPR002504">
    <property type="entry name" value="NADK"/>
</dbReference>
<dbReference type="NCBIfam" id="NF002306">
    <property type="entry name" value="PRK01231.1"/>
    <property type="match status" value="1"/>
</dbReference>
<dbReference type="PANTHER" id="PTHR20275">
    <property type="entry name" value="NAD KINASE"/>
    <property type="match status" value="1"/>
</dbReference>
<dbReference type="PANTHER" id="PTHR20275:SF0">
    <property type="entry name" value="NAD KINASE"/>
    <property type="match status" value="1"/>
</dbReference>
<dbReference type="Pfam" id="PF01513">
    <property type="entry name" value="NAD_kinase"/>
    <property type="match status" value="1"/>
</dbReference>
<dbReference type="Pfam" id="PF20143">
    <property type="entry name" value="NAD_kinase_C"/>
    <property type="match status" value="1"/>
</dbReference>
<dbReference type="SUPFAM" id="SSF111331">
    <property type="entry name" value="NAD kinase/diacylglycerol kinase-like"/>
    <property type="match status" value="1"/>
</dbReference>
<accession>Q02PQ1</accession>
<keyword id="KW-0067">ATP-binding</keyword>
<keyword id="KW-0963">Cytoplasm</keyword>
<keyword id="KW-0418">Kinase</keyword>
<keyword id="KW-0520">NAD</keyword>
<keyword id="KW-0521">NADP</keyword>
<keyword id="KW-0547">Nucleotide-binding</keyword>
<keyword id="KW-0808">Transferase</keyword>
<organism>
    <name type="scientific">Pseudomonas aeruginosa (strain UCBPP-PA14)</name>
    <dbReference type="NCBI Taxonomy" id="208963"/>
    <lineage>
        <taxon>Bacteria</taxon>
        <taxon>Pseudomonadati</taxon>
        <taxon>Pseudomonadota</taxon>
        <taxon>Gammaproteobacteria</taxon>
        <taxon>Pseudomonadales</taxon>
        <taxon>Pseudomonadaceae</taxon>
        <taxon>Pseudomonas</taxon>
    </lineage>
</organism>
<sequence length="295" mass="32140">MEPFRNIGIIGRLGSTQVLDTIRRLKKFLIDRHLHVILEDTIAEVLPGHGLQTCSRKIMGEICDLVVVVGGDGSMLGAARALARHKVPVLGINRGSLGFLTDIRPDELEAKVGEVLDGQYIVESRFLLDAQVRRGIDSMGQGDALNDVVLHPGKSTRMIEFELYIDGQFVCSQKADGLIVATPTGSTAYALSAGGPIMHPKLDAIVIVPMYPHMLSSRPIVVDGNSELKIVVSPNMQIYPQVSCDGQNHFTCAPGDTVTISKKPQKLRLIHPIDHNYYEICRTKLGWGSRLGGGD</sequence>
<reference key="1">
    <citation type="journal article" date="2006" name="Genome Biol.">
        <title>Genomic analysis reveals that Pseudomonas aeruginosa virulence is combinatorial.</title>
        <authorList>
            <person name="Lee D.G."/>
            <person name="Urbach J.M."/>
            <person name="Wu G."/>
            <person name="Liberati N.T."/>
            <person name="Feinbaum R.L."/>
            <person name="Miyata S."/>
            <person name="Diggins L.T."/>
            <person name="He J."/>
            <person name="Saucier M."/>
            <person name="Deziel E."/>
            <person name="Friedman L."/>
            <person name="Li L."/>
            <person name="Grills G."/>
            <person name="Montgomery K."/>
            <person name="Kucherlapati R."/>
            <person name="Rahme L.G."/>
            <person name="Ausubel F.M."/>
        </authorList>
    </citation>
    <scope>NUCLEOTIDE SEQUENCE [LARGE SCALE GENOMIC DNA]</scope>
    <source>
        <strain>UCBPP-PA14</strain>
    </source>
</reference>
<feature type="chain" id="PRO_1000005429" description="NAD kinase">
    <location>
        <begin position="1"/>
        <end position="295"/>
    </location>
</feature>
<feature type="active site" description="Proton acceptor" evidence="1">
    <location>
        <position position="72"/>
    </location>
</feature>
<feature type="binding site" evidence="1">
    <location>
        <begin position="72"/>
        <end position="73"/>
    </location>
    <ligand>
        <name>NAD(+)</name>
        <dbReference type="ChEBI" id="CHEBI:57540"/>
    </ligand>
</feature>
<feature type="binding site" evidence="1">
    <location>
        <begin position="146"/>
        <end position="147"/>
    </location>
    <ligand>
        <name>NAD(+)</name>
        <dbReference type="ChEBI" id="CHEBI:57540"/>
    </ligand>
</feature>
<feature type="binding site" evidence="1">
    <location>
        <position position="157"/>
    </location>
    <ligand>
        <name>NAD(+)</name>
        <dbReference type="ChEBI" id="CHEBI:57540"/>
    </ligand>
</feature>
<feature type="binding site" evidence="1">
    <location>
        <position position="174"/>
    </location>
    <ligand>
        <name>NAD(+)</name>
        <dbReference type="ChEBI" id="CHEBI:57540"/>
    </ligand>
</feature>
<feature type="binding site" evidence="1">
    <location>
        <position position="176"/>
    </location>
    <ligand>
        <name>NAD(+)</name>
        <dbReference type="ChEBI" id="CHEBI:57540"/>
    </ligand>
</feature>
<feature type="binding site" evidence="1">
    <location>
        <begin position="187"/>
        <end position="192"/>
    </location>
    <ligand>
        <name>NAD(+)</name>
        <dbReference type="ChEBI" id="CHEBI:57540"/>
    </ligand>
</feature>
<feature type="binding site" evidence="1">
    <location>
        <position position="247"/>
    </location>
    <ligand>
        <name>NAD(+)</name>
        <dbReference type="ChEBI" id="CHEBI:57540"/>
    </ligand>
</feature>
<proteinExistence type="inferred from homology"/>
<gene>
    <name evidence="1" type="primary">nadK</name>
    <name type="ordered locus">PA14_24220</name>
</gene>
<evidence type="ECO:0000255" key="1">
    <source>
        <dbReference type="HAMAP-Rule" id="MF_00361"/>
    </source>
</evidence>
<name>NADK_PSEAB</name>